<protein>
    <recommendedName>
        <fullName>Cyclin-dependent kinase 9</fullName>
        <ecNumber evidence="1">2.7.11.22</ecNumber>
        <ecNumber evidence="1">2.7.11.23</ecNumber>
    </recommendedName>
    <alternativeName>
        <fullName>Cell division protein kinase 9</fullName>
    </alternativeName>
</protein>
<reference key="1">
    <citation type="submission" date="2000-05" db="EMBL/GenBank/DDBJ databases">
        <title>The isolation and characterization of cdk9 from the zebrafish.</title>
        <authorList>
            <person name="Bauer M.P."/>
            <person name="Goetz F.W."/>
        </authorList>
    </citation>
    <scope>NUCLEOTIDE SEQUENCE [MRNA] (ISOFORM 2)</scope>
</reference>
<reference key="2">
    <citation type="submission" date="2002-11" db="EMBL/GenBank/DDBJ databases">
        <title>Molecular analysis of CDC-9 in zebrafish.</title>
        <authorList>
            <person name="Chen J.-Y."/>
            <person name="Wu J.-L."/>
        </authorList>
    </citation>
    <scope>NUCLEOTIDE SEQUENCE [MRNA] (ISOFORM 1)</scope>
</reference>
<reference key="3">
    <citation type="journal article" date="2013" name="Nature">
        <title>The zebrafish reference genome sequence and its relationship to the human genome.</title>
        <authorList>
            <person name="Howe K."/>
            <person name="Clark M.D."/>
            <person name="Torroja C.F."/>
            <person name="Torrance J."/>
            <person name="Berthelot C."/>
            <person name="Muffato M."/>
            <person name="Collins J.E."/>
            <person name="Humphray S."/>
            <person name="McLaren K."/>
            <person name="Matthews L."/>
            <person name="McLaren S."/>
            <person name="Sealy I."/>
            <person name="Caccamo M."/>
            <person name="Churcher C."/>
            <person name="Scott C."/>
            <person name="Barrett J.C."/>
            <person name="Koch R."/>
            <person name="Rauch G.J."/>
            <person name="White S."/>
            <person name="Chow W."/>
            <person name="Kilian B."/>
            <person name="Quintais L.T."/>
            <person name="Guerra-Assuncao J.A."/>
            <person name="Zhou Y."/>
            <person name="Gu Y."/>
            <person name="Yen J."/>
            <person name="Vogel J.H."/>
            <person name="Eyre T."/>
            <person name="Redmond S."/>
            <person name="Banerjee R."/>
            <person name="Chi J."/>
            <person name="Fu B."/>
            <person name="Langley E."/>
            <person name="Maguire S.F."/>
            <person name="Laird G.K."/>
            <person name="Lloyd D."/>
            <person name="Kenyon E."/>
            <person name="Donaldson S."/>
            <person name="Sehra H."/>
            <person name="Almeida-King J."/>
            <person name="Loveland J."/>
            <person name="Trevanion S."/>
            <person name="Jones M."/>
            <person name="Quail M."/>
            <person name="Willey D."/>
            <person name="Hunt A."/>
            <person name="Burton J."/>
            <person name="Sims S."/>
            <person name="McLay K."/>
            <person name="Plumb B."/>
            <person name="Davis J."/>
            <person name="Clee C."/>
            <person name="Oliver K."/>
            <person name="Clark R."/>
            <person name="Riddle C."/>
            <person name="Elliot D."/>
            <person name="Threadgold G."/>
            <person name="Harden G."/>
            <person name="Ware D."/>
            <person name="Begum S."/>
            <person name="Mortimore B."/>
            <person name="Kerry G."/>
            <person name="Heath P."/>
            <person name="Phillimore B."/>
            <person name="Tracey A."/>
            <person name="Corby N."/>
            <person name="Dunn M."/>
            <person name="Johnson C."/>
            <person name="Wood J."/>
            <person name="Clark S."/>
            <person name="Pelan S."/>
            <person name="Griffiths G."/>
            <person name="Smith M."/>
            <person name="Glithero R."/>
            <person name="Howden P."/>
            <person name="Barker N."/>
            <person name="Lloyd C."/>
            <person name="Stevens C."/>
            <person name="Harley J."/>
            <person name="Holt K."/>
            <person name="Panagiotidis G."/>
            <person name="Lovell J."/>
            <person name="Beasley H."/>
            <person name="Henderson C."/>
            <person name="Gordon D."/>
            <person name="Auger K."/>
            <person name="Wright D."/>
            <person name="Collins J."/>
            <person name="Raisen C."/>
            <person name="Dyer L."/>
            <person name="Leung K."/>
            <person name="Robertson L."/>
            <person name="Ambridge K."/>
            <person name="Leongamornlert D."/>
            <person name="McGuire S."/>
            <person name="Gilderthorp R."/>
            <person name="Griffiths C."/>
            <person name="Manthravadi D."/>
            <person name="Nichol S."/>
            <person name="Barker G."/>
            <person name="Whitehead S."/>
            <person name="Kay M."/>
            <person name="Brown J."/>
            <person name="Murnane C."/>
            <person name="Gray E."/>
            <person name="Humphries M."/>
            <person name="Sycamore N."/>
            <person name="Barker D."/>
            <person name="Saunders D."/>
            <person name="Wallis J."/>
            <person name="Babbage A."/>
            <person name="Hammond S."/>
            <person name="Mashreghi-Mohammadi M."/>
            <person name="Barr L."/>
            <person name="Martin S."/>
            <person name="Wray P."/>
            <person name="Ellington A."/>
            <person name="Matthews N."/>
            <person name="Ellwood M."/>
            <person name="Woodmansey R."/>
            <person name="Clark G."/>
            <person name="Cooper J."/>
            <person name="Tromans A."/>
            <person name="Grafham D."/>
            <person name="Skuce C."/>
            <person name="Pandian R."/>
            <person name="Andrews R."/>
            <person name="Harrison E."/>
            <person name="Kimberley A."/>
            <person name="Garnett J."/>
            <person name="Fosker N."/>
            <person name="Hall R."/>
            <person name="Garner P."/>
            <person name="Kelly D."/>
            <person name="Bird C."/>
            <person name="Palmer S."/>
            <person name="Gehring I."/>
            <person name="Berger A."/>
            <person name="Dooley C.M."/>
            <person name="Ersan-Urun Z."/>
            <person name="Eser C."/>
            <person name="Geiger H."/>
            <person name="Geisler M."/>
            <person name="Karotki L."/>
            <person name="Kirn A."/>
            <person name="Konantz J."/>
            <person name="Konantz M."/>
            <person name="Oberlander M."/>
            <person name="Rudolph-Geiger S."/>
            <person name="Teucke M."/>
            <person name="Lanz C."/>
            <person name="Raddatz G."/>
            <person name="Osoegawa K."/>
            <person name="Zhu B."/>
            <person name="Rapp A."/>
            <person name="Widaa S."/>
            <person name="Langford C."/>
            <person name="Yang F."/>
            <person name="Schuster S.C."/>
            <person name="Carter N.P."/>
            <person name="Harrow J."/>
            <person name="Ning Z."/>
            <person name="Herrero J."/>
            <person name="Searle S.M."/>
            <person name="Enright A."/>
            <person name="Geisler R."/>
            <person name="Plasterk R.H."/>
            <person name="Lee C."/>
            <person name="Westerfield M."/>
            <person name="de Jong P.J."/>
            <person name="Zon L.I."/>
            <person name="Postlethwait J.H."/>
            <person name="Nusslein-Volhard C."/>
            <person name="Hubbard T.J."/>
            <person name="Roest Crollius H."/>
            <person name="Rogers J."/>
            <person name="Stemple D.L."/>
        </authorList>
    </citation>
    <scope>NUCLEOTIDE SEQUENCE [LARGE SCALE GENOMIC DNA]</scope>
    <source>
        <strain>Tuebingen</strain>
    </source>
</reference>
<reference key="4">
    <citation type="submission" date="2003-08" db="EMBL/GenBank/DDBJ databases">
        <authorList>
            <consortium name="NIH - Zebrafish Gene Collection (ZGC) project"/>
        </authorList>
    </citation>
    <scope>NUCLEOTIDE SEQUENCE [LARGE SCALE MRNA]</scope>
</reference>
<reference key="5">
    <citation type="journal article" date="2015" name="J. Cell Sci.">
        <title>CDK9 and its repressor LARP7 modulate cardiomyocyte proliferation and response to injury in the zebrafish heart.</title>
        <authorList>
            <person name="Matrone G."/>
            <person name="Wilson K.S."/>
            <person name="Maqsood S."/>
            <person name="Mullins J.J."/>
            <person name="Tucker C.S."/>
            <person name="Denvir M.A."/>
        </authorList>
    </citation>
    <scope>DISRUPTION PHENOTYPE</scope>
    <scope>DEVELOPMENTAL STAGE</scope>
</reference>
<sequence>MSKYYDGVEFPFCDEFSKYEKLAKIGQGTFGEVFKAKHRQTGKKVALKKVLMENEKEGFPITALREIKILQLLKHENVVNLIEICRTKGEATQFNRYKGSIYLVFDFCEHDLAGLLSNANVKFTLAEIKRVMQMLLNGLYYIHRNKILHRDMKAANVLITRDGVLKLADFGLARAFSLAKNSQGNRYTNRVVTLWYRPPELLLGERDYGPPIDLWGAGCIMAEMWTRSPIMQGNTEQHQLTLISQLCGSITPEVWPGVDKKYELYQKMELPKGQKRKVKDRLKAYVKDPYALDLIDKLLVLDPAQRIDSDDALNHDFFWSDPMPSDLKNMLSTHNTSMFEYLAPPRRRGHMPQQPANQNRNPATTSQSEFDRVF</sequence>
<organism>
    <name type="scientific">Danio rerio</name>
    <name type="common">Zebrafish</name>
    <name type="synonym">Brachydanio rerio</name>
    <dbReference type="NCBI Taxonomy" id="7955"/>
    <lineage>
        <taxon>Eukaryota</taxon>
        <taxon>Metazoa</taxon>
        <taxon>Chordata</taxon>
        <taxon>Craniata</taxon>
        <taxon>Vertebrata</taxon>
        <taxon>Euteleostomi</taxon>
        <taxon>Actinopterygii</taxon>
        <taxon>Neopterygii</taxon>
        <taxon>Teleostei</taxon>
        <taxon>Ostariophysi</taxon>
        <taxon>Cypriniformes</taxon>
        <taxon>Danionidae</taxon>
        <taxon>Danioninae</taxon>
        <taxon>Danio</taxon>
    </lineage>
</organism>
<feature type="chain" id="PRO_0000449917" description="Cyclin-dependent kinase 9">
    <location>
        <begin position="1"/>
        <end position="374"/>
    </location>
</feature>
<feature type="domain" description="Protein kinase" evidence="3">
    <location>
        <begin position="19"/>
        <end position="318"/>
    </location>
</feature>
<feature type="region of interest" description="Disordered" evidence="4">
    <location>
        <begin position="345"/>
        <end position="374"/>
    </location>
</feature>
<feature type="compositionally biased region" description="Polar residues" evidence="4">
    <location>
        <begin position="354"/>
        <end position="368"/>
    </location>
</feature>
<feature type="active site" description="Proton acceptor" evidence="3">
    <location>
        <position position="151"/>
    </location>
</feature>
<feature type="binding site" evidence="3">
    <location>
        <begin position="25"/>
        <end position="33"/>
    </location>
    <ligand>
        <name>ATP</name>
        <dbReference type="ChEBI" id="CHEBI:30616"/>
    </ligand>
</feature>
<feature type="binding site" evidence="3">
    <location>
        <position position="48"/>
    </location>
    <ligand>
        <name>ATP</name>
        <dbReference type="ChEBI" id="CHEBI:30616"/>
    </ligand>
</feature>
<feature type="splice variant" id="VSP_060578" description="In isoform 2.">
    <original>M</original>
    <variation>MQRDKTGSSGGGEKPDRETAIM</variation>
    <location>
        <position position="1"/>
    </location>
</feature>
<feature type="splice variant" id="VSP_060579" description="In isoform 2.">
    <location>
        <begin position="89"/>
        <end position="90"/>
    </location>
</feature>
<keyword id="KW-0025">Alternative splicing</keyword>
<keyword id="KW-0067">ATP-binding</keyword>
<keyword id="KW-0963">Cytoplasm</keyword>
<keyword id="KW-0227">DNA damage</keyword>
<keyword id="KW-0234">DNA repair</keyword>
<keyword id="KW-0418">Kinase</keyword>
<keyword id="KW-0547">Nucleotide-binding</keyword>
<keyword id="KW-0539">Nucleus</keyword>
<keyword id="KW-1185">Reference proteome</keyword>
<keyword id="KW-0723">Serine/threonine-protein kinase</keyword>
<keyword id="KW-0804">Transcription</keyword>
<keyword id="KW-0805">Transcription regulation</keyword>
<keyword id="KW-0808">Transferase</keyword>
<name>CDK9_DANRE</name>
<dbReference type="EC" id="2.7.11.22" evidence="1"/>
<dbReference type="EC" id="2.7.11.23" evidence="1"/>
<dbReference type="EMBL" id="AF268046">
    <property type="protein sequence ID" value="AAP47016.1"/>
    <property type="molecule type" value="mRNA"/>
</dbReference>
<dbReference type="EMBL" id="AY181980">
    <property type="protein sequence ID" value="AAO60241.1"/>
    <property type="molecule type" value="mRNA"/>
</dbReference>
<dbReference type="EMBL" id="BX530036">
    <property type="status" value="NOT_ANNOTATED_CDS"/>
    <property type="molecule type" value="Genomic_DNA"/>
</dbReference>
<dbReference type="EMBL" id="BC055634">
    <property type="protein sequence ID" value="AAH55634.1"/>
    <property type="molecule type" value="mRNA"/>
</dbReference>
<dbReference type="RefSeq" id="NP_997756.1">
    <molecule id="Q7SXE8-2"/>
    <property type="nucleotide sequence ID" value="NM_212591.2"/>
</dbReference>
<dbReference type="SMR" id="Q7SXE8"/>
<dbReference type="FunCoup" id="Q7SXE8">
    <property type="interactions" value="2836"/>
</dbReference>
<dbReference type="STRING" id="7955.ENSDARP00000065858"/>
<dbReference type="PaxDb" id="7955-ENSDARP00000065858"/>
<dbReference type="Ensembl" id="ENSDART00000166287">
    <molecule id="Q7SXE8-1"/>
    <property type="protein sequence ID" value="ENSDARP00000134607"/>
    <property type="gene ID" value="ENSDARG00000044811"/>
</dbReference>
<dbReference type="GeneID" id="321602"/>
<dbReference type="KEGG" id="dre:321602"/>
<dbReference type="AGR" id="ZFIN:ZDB-GENE-030131-321"/>
<dbReference type="CTD" id="1025"/>
<dbReference type="ZFIN" id="ZDB-GENE-030131-321">
    <property type="gene designation" value="cdk9"/>
</dbReference>
<dbReference type="eggNOG" id="KOG0669">
    <property type="taxonomic scope" value="Eukaryota"/>
</dbReference>
<dbReference type="HOGENOM" id="CLU_000288_181_1_1"/>
<dbReference type="InParanoid" id="Q7SXE8"/>
<dbReference type="OMA" id="FPHCDES"/>
<dbReference type="OrthoDB" id="204883at2759"/>
<dbReference type="TreeFam" id="TF101039"/>
<dbReference type="Reactome" id="R-DRE-674695">
    <property type="pathway name" value="RNA Polymerase II Pre-transcription Events"/>
</dbReference>
<dbReference type="Reactome" id="R-DRE-6796648">
    <property type="pathway name" value="TP53 Regulates Transcription of DNA Repair Genes"/>
</dbReference>
<dbReference type="Reactome" id="R-DRE-6807505">
    <property type="pathway name" value="RNA polymerase II transcribes snRNA genes"/>
</dbReference>
<dbReference type="PRO" id="PR:Q7SXE8"/>
<dbReference type="Proteomes" id="UP000000437">
    <property type="component" value="Alternate scaffold 21"/>
</dbReference>
<dbReference type="Proteomes" id="UP000000437">
    <property type="component" value="Chromosome 21"/>
</dbReference>
<dbReference type="Bgee" id="ENSDARG00000044811">
    <property type="expression patterns" value="Expressed in blastula and 29 other cell types or tissues"/>
</dbReference>
<dbReference type="ExpressionAtlas" id="Q7SXE8">
    <property type="expression patterns" value="baseline and differential"/>
</dbReference>
<dbReference type="GO" id="GO:0005737">
    <property type="term" value="C:cytoplasm"/>
    <property type="evidence" value="ECO:0007669"/>
    <property type="project" value="UniProtKB-SubCell"/>
</dbReference>
<dbReference type="GO" id="GO:0005634">
    <property type="term" value="C:nucleus"/>
    <property type="evidence" value="ECO:0000318"/>
    <property type="project" value="GO_Central"/>
</dbReference>
<dbReference type="GO" id="GO:0016605">
    <property type="term" value="C:PML body"/>
    <property type="evidence" value="ECO:0007669"/>
    <property type="project" value="UniProtKB-SubCell"/>
</dbReference>
<dbReference type="GO" id="GO:0005524">
    <property type="term" value="F:ATP binding"/>
    <property type="evidence" value="ECO:0007669"/>
    <property type="project" value="UniProtKB-KW"/>
</dbReference>
<dbReference type="GO" id="GO:0004693">
    <property type="term" value="F:cyclin-dependent protein serine/threonine kinase activity"/>
    <property type="evidence" value="ECO:0000318"/>
    <property type="project" value="GO_Central"/>
</dbReference>
<dbReference type="GO" id="GO:0106310">
    <property type="term" value="F:protein serine kinase activity"/>
    <property type="evidence" value="ECO:0007669"/>
    <property type="project" value="RHEA"/>
</dbReference>
<dbReference type="GO" id="GO:0004674">
    <property type="term" value="F:protein serine/threonine kinase activity"/>
    <property type="evidence" value="ECO:0000250"/>
    <property type="project" value="UniProtKB"/>
</dbReference>
<dbReference type="GO" id="GO:0008353">
    <property type="term" value="F:RNA polymerase II CTD heptapeptide repeat kinase activity"/>
    <property type="evidence" value="ECO:0000318"/>
    <property type="project" value="GO_Central"/>
</dbReference>
<dbReference type="GO" id="GO:0061026">
    <property type="term" value="P:cardiac muscle tissue regeneration"/>
    <property type="evidence" value="ECO:0000315"/>
    <property type="project" value="ZFIN"/>
</dbReference>
<dbReference type="GO" id="GO:0008283">
    <property type="term" value="P:cell population proliferation"/>
    <property type="evidence" value="ECO:0000315"/>
    <property type="project" value="ZFIN"/>
</dbReference>
<dbReference type="GO" id="GO:0006281">
    <property type="term" value="P:DNA repair"/>
    <property type="evidence" value="ECO:0007669"/>
    <property type="project" value="UniProtKB-KW"/>
</dbReference>
<dbReference type="GO" id="GO:0090594">
    <property type="term" value="P:inflammatory response to wounding"/>
    <property type="evidence" value="ECO:0000315"/>
    <property type="project" value="ZFIN"/>
</dbReference>
<dbReference type="GO" id="GO:0120187">
    <property type="term" value="P:positive regulation of protein localization to chromatin"/>
    <property type="evidence" value="ECO:0000250"/>
    <property type="project" value="UniProtKB"/>
</dbReference>
<dbReference type="GO" id="GO:0045944">
    <property type="term" value="P:positive regulation of transcription by RNA polymerase II"/>
    <property type="evidence" value="ECO:0000250"/>
    <property type="project" value="UniProtKB"/>
</dbReference>
<dbReference type="GO" id="GO:0032968">
    <property type="term" value="P:positive regulation of transcription elongation by RNA polymerase II"/>
    <property type="evidence" value="ECO:0000318"/>
    <property type="project" value="GO_Central"/>
</dbReference>
<dbReference type="GO" id="GO:0065003">
    <property type="term" value="P:protein-containing complex assembly"/>
    <property type="evidence" value="ECO:0000353"/>
    <property type="project" value="ZFIN"/>
</dbReference>
<dbReference type="GO" id="GO:0060043">
    <property type="term" value="P:regulation of cardiac muscle cell proliferation"/>
    <property type="evidence" value="ECO:0000315"/>
    <property type="project" value="ZFIN"/>
</dbReference>
<dbReference type="GO" id="GO:0030852">
    <property type="term" value="P:regulation of granulocyte differentiation"/>
    <property type="evidence" value="ECO:0000316"/>
    <property type="project" value="ZFIN"/>
</dbReference>
<dbReference type="CDD" id="cd07865">
    <property type="entry name" value="STKc_CDK9"/>
    <property type="match status" value="1"/>
</dbReference>
<dbReference type="FunFam" id="1.10.510.10:FF:000203">
    <property type="entry name" value="Cyclin-dependent kinase 9"/>
    <property type="match status" value="1"/>
</dbReference>
<dbReference type="FunFam" id="3.30.200.20:FF:000227">
    <property type="entry name" value="Cyclin-dependent kinase 9"/>
    <property type="match status" value="1"/>
</dbReference>
<dbReference type="Gene3D" id="3.30.200.20">
    <property type="entry name" value="Phosphorylase Kinase, domain 1"/>
    <property type="match status" value="1"/>
</dbReference>
<dbReference type="Gene3D" id="1.10.510.10">
    <property type="entry name" value="Transferase(Phosphotransferase) domain 1"/>
    <property type="match status" value="1"/>
</dbReference>
<dbReference type="InterPro" id="IPR050108">
    <property type="entry name" value="CDK"/>
</dbReference>
<dbReference type="InterPro" id="IPR011009">
    <property type="entry name" value="Kinase-like_dom_sf"/>
</dbReference>
<dbReference type="InterPro" id="IPR000719">
    <property type="entry name" value="Prot_kinase_dom"/>
</dbReference>
<dbReference type="InterPro" id="IPR017441">
    <property type="entry name" value="Protein_kinase_ATP_BS"/>
</dbReference>
<dbReference type="InterPro" id="IPR008271">
    <property type="entry name" value="Ser/Thr_kinase_AS"/>
</dbReference>
<dbReference type="PANTHER" id="PTHR24056">
    <property type="entry name" value="CELL DIVISION PROTEIN KINASE"/>
    <property type="match status" value="1"/>
</dbReference>
<dbReference type="PANTHER" id="PTHR24056:SF233">
    <property type="entry name" value="CYCLIN-DEPENDENT KINASE 9"/>
    <property type="match status" value="1"/>
</dbReference>
<dbReference type="Pfam" id="PF00069">
    <property type="entry name" value="Pkinase"/>
    <property type="match status" value="1"/>
</dbReference>
<dbReference type="SMART" id="SM00220">
    <property type="entry name" value="S_TKc"/>
    <property type="match status" value="1"/>
</dbReference>
<dbReference type="SUPFAM" id="SSF56112">
    <property type="entry name" value="Protein kinase-like (PK-like)"/>
    <property type="match status" value="1"/>
</dbReference>
<dbReference type="PROSITE" id="PS00107">
    <property type="entry name" value="PROTEIN_KINASE_ATP"/>
    <property type="match status" value="1"/>
</dbReference>
<dbReference type="PROSITE" id="PS50011">
    <property type="entry name" value="PROTEIN_KINASE_DOM"/>
    <property type="match status" value="1"/>
</dbReference>
<dbReference type="PROSITE" id="PS00108">
    <property type="entry name" value="PROTEIN_KINASE_ST"/>
    <property type="match status" value="1"/>
</dbReference>
<gene>
    <name evidence="7" type="primary">cdk9</name>
</gene>
<evidence type="ECO:0000250" key="1">
    <source>
        <dbReference type="UniProtKB" id="P50750"/>
    </source>
</evidence>
<evidence type="ECO:0000250" key="2">
    <source>
        <dbReference type="UniProtKB" id="Q99J95"/>
    </source>
</evidence>
<evidence type="ECO:0000255" key="3">
    <source>
        <dbReference type="PROSITE-ProRule" id="PRU00159"/>
    </source>
</evidence>
<evidence type="ECO:0000256" key="4">
    <source>
        <dbReference type="SAM" id="MobiDB-lite"/>
    </source>
</evidence>
<evidence type="ECO:0000269" key="5">
    <source>
    </source>
</evidence>
<evidence type="ECO:0000305" key="6"/>
<evidence type="ECO:0000312" key="7">
    <source>
        <dbReference type="ZFIN" id="ZDB-GENE-030131-321"/>
    </source>
</evidence>
<accession>Q7SXE8</accession>
<accession>A0A0R4II91</accession>
<accession>Q7T3L5</accession>
<comment type="function">
    <text evidence="1">Protein kinase involved in the regulation of transcription. Member of the cyclin-dependent kinase pair (CDK9/cyclin-T) complex, also called positive transcription elongation factor b (P-TEFb), which facilitates the transition from abortive to productive elongation by phosphorylating the CTD (C-terminal domain) of the large subunit of RNA polymerase II (RNAP II) polr2a, supt5h and rdbp. This complex is inactive when in the 7SK snRNP complex form. Regulates cytokine inducible transcription networks by facilitating promoter recognition of target transcription factors. P-TEFb is also involved in cotranscriptional histone modification, mRNA processing and mRNA export.</text>
</comment>
<comment type="catalytic activity">
    <reaction evidence="1">
        <text>L-seryl-[protein] + ATP = O-phospho-L-seryl-[protein] + ADP + H(+)</text>
        <dbReference type="Rhea" id="RHEA:17989"/>
        <dbReference type="Rhea" id="RHEA-COMP:9863"/>
        <dbReference type="Rhea" id="RHEA-COMP:11604"/>
        <dbReference type="ChEBI" id="CHEBI:15378"/>
        <dbReference type="ChEBI" id="CHEBI:29999"/>
        <dbReference type="ChEBI" id="CHEBI:30616"/>
        <dbReference type="ChEBI" id="CHEBI:83421"/>
        <dbReference type="ChEBI" id="CHEBI:456216"/>
        <dbReference type="EC" id="2.7.11.22"/>
    </reaction>
    <physiologicalReaction direction="left-to-right" evidence="1">
        <dbReference type="Rhea" id="RHEA:17990"/>
    </physiologicalReaction>
</comment>
<comment type="catalytic activity">
    <reaction evidence="1">
        <text>L-threonyl-[protein] + ATP = O-phospho-L-threonyl-[protein] + ADP + H(+)</text>
        <dbReference type="Rhea" id="RHEA:46608"/>
        <dbReference type="Rhea" id="RHEA-COMP:11060"/>
        <dbReference type="Rhea" id="RHEA-COMP:11605"/>
        <dbReference type="ChEBI" id="CHEBI:15378"/>
        <dbReference type="ChEBI" id="CHEBI:30013"/>
        <dbReference type="ChEBI" id="CHEBI:30616"/>
        <dbReference type="ChEBI" id="CHEBI:61977"/>
        <dbReference type="ChEBI" id="CHEBI:456216"/>
        <dbReference type="EC" id="2.7.11.22"/>
    </reaction>
    <physiologicalReaction direction="left-to-right" evidence="1">
        <dbReference type="Rhea" id="RHEA:46609"/>
    </physiologicalReaction>
</comment>
<comment type="catalytic activity">
    <reaction evidence="1">
        <text>[DNA-directed RNA polymerase] + ATP = phospho-[DNA-directed RNA polymerase] + ADP + H(+)</text>
        <dbReference type="Rhea" id="RHEA:10216"/>
        <dbReference type="Rhea" id="RHEA-COMP:11321"/>
        <dbReference type="Rhea" id="RHEA-COMP:11322"/>
        <dbReference type="ChEBI" id="CHEBI:15378"/>
        <dbReference type="ChEBI" id="CHEBI:30616"/>
        <dbReference type="ChEBI" id="CHEBI:43176"/>
        <dbReference type="ChEBI" id="CHEBI:68546"/>
        <dbReference type="ChEBI" id="CHEBI:456216"/>
        <dbReference type="EC" id="2.7.11.23"/>
    </reaction>
    <physiologicalReaction direction="left-to-right" evidence="1">
        <dbReference type="Rhea" id="RHEA:10217"/>
    </physiologicalReaction>
</comment>
<comment type="subunit">
    <text evidence="1 2">Component of the super elongation complex (SEC). Associates with ccnt1/cyclin-T1, ccnt2/cyclin-T2 or ccnk/cyclin-K to form active P-TEFb.</text>
</comment>
<comment type="subcellular location">
    <subcellularLocation>
        <location evidence="1">Nucleus</location>
    </subcellularLocation>
    <subcellularLocation>
        <location evidence="1">Cytoplasm</location>
    </subcellularLocation>
    <subcellularLocation>
        <location evidence="1">Nucleus</location>
        <location evidence="1">PML body</location>
    </subcellularLocation>
</comment>
<comment type="alternative products">
    <event type="alternative splicing"/>
    <isoform>
        <id>Q7SXE8-1</id>
        <name>1</name>
        <sequence type="displayed"/>
    </isoform>
    <isoform>
        <id>Q7SXE8-2</id>
        <name>2</name>
        <sequence type="described" ref="VSP_060578 VSP_060579"/>
    </isoform>
</comment>
<comment type="developmental stage">
    <text evidence="5">Expressed from 24 hours post-fertilization (hpf) (PubMed:26542022). Expression increases between 24 and 72 hpf and then decreases towards 120 hpf (PubMed:26542022). In embryonic hearts expression peaks at 48 hpf and again at 96 hpf, decreasing at 120 hpf to levels then detected in adult hearts (PubMed:26542022).</text>
</comment>
<comment type="disruption phenotype">
    <text evidence="5">Morpholino knockdown of the protein causes in larvae causes high levels of lethality.</text>
</comment>
<comment type="similarity">
    <text evidence="6">Belongs to the protein kinase superfamily. CMGC Ser/Thr protein kinase family. CDC2/CDKX subfamily.</text>
</comment>
<proteinExistence type="evidence at transcript level"/>